<proteinExistence type="inferred from homology"/>
<reference key="1">
    <citation type="submission" date="2007-05" db="EMBL/GenBank/DDBJ databases">
        <title>Complete sequence of Pseudomonas putida F1.</title>
        <authorList>
            <consortium name="US DOE Joint Genome Institute"/>
            <person name="Copeland A."/>
            <person name="Lucas S."/>
            <person name="Lapidus A."/>
            <person name="Barry K."/>
            <person name="Detter J.C."/>
            <person name="Glavina del Rio T."/>
            <person name="Hammon N."/>
            <person name="Israni S."/>
            <person name="Dalin E."/>
            <person name="Tice H."/>
            <person name="Pitluck S."/>
            <person name="Chain P."/>
            <person name="Malfatti S."/>
            <person name="Shin M."/>
            <person name="Vergez L."/>
            <person name="Schmutz J."/>
            <person name="Larimer F."/>
            <person name="Land M."/>
            <person name="Hauser L."/>
            <person name="Kyrpides N."/>
            <person name="Lykidis A."/>
            <person name="Parales R."/>
            <person name="Richardson P."/>
        </authorList>
    </citation>
    <scope>NUCLEOTIDE SEQUENCE [LARGE SCALE GENOMIC DNA]</scope>
    <source>
        <strain>ATCC 700007 / DSM 6899 / JCM 31910 / BCRC 17059 / LMG 24140 / F1</strain>
    </source>
</reference>
<gene>
    <name evidence="1" type="primary">ung</name>
    <name type="ordered locus">Pput_4308</name>
</gene>
<protein>
    <recommendedName>
        <fullName evidence="1">Uracil-DNA glycosylase</fullName>
        <shortName evidence="1">UDG</shortName>
        <ecNumber evidence="1">3.2.2.27</ecNumber>
    </recommendedName>
</protein>
<comment type="function">
    <text evidence="1">Excises uracil residues from the DNA which can arise as a result of misincorporation of dUMP residues by DNA polymerase or due to deamination of cytosine.</text>
</comment>
<comment type="catalytic activity">
    <reaction evidence="1">
        <text>Hydrolyzes single-stranded DNA or mismatched double-stranded DNA and polynucleotides, releasing free uracil.</text>
        <dbReference type="EC" id="3.2.2.27"/>
    </reaction>
</comment>
<comment type="subcellular location">
    <subcellularLocation>
        <location evidence="1">Cytoplasm</location>
    </subcellularLocation>
</comment>
<comment type="similarity">
    <text evidence="1">Belongs to the uracil-DNA glycosylase (UDG) superfamily. UNG family.</text>
</comment>
<sequence>MTDDDRIKLEPSWKAALRGEFDQPYMHQLREFLRGEYAAGKEIYPPGPLIFNALNSTPLGQVKVVILGQDPYHGPGQAHGLCFSVQPGVATPPSLVNIYKELQRDLNIPIPSHGYLQSWAEQGVLLLNTTMTVERANAASHAKKGWELFTDRIIQVVSEQCPNVVFLLWGAHAQSKQKLIDGTKHLVLKSVHPSPLSAYRGFIGCGHFSRTNSFLEQRGLGPIDWALPPL</sequence>
<dbReference type="EC" id="3.2.2.27" evidence="1"/>
<dbReference type="EMBL" id="CP000712">
    <property type="protein sequence ID" value="ABQ80432.1"/>
    <property type="molecule type" value="Genomic_DNA"/>
</dbReference>
<dbReference type="SMR" id="A5W8H2"/>
<dbReference type="KEGG" id="ppf:Pput_4308"/>
<dbReference type="eggNOG" id="COG0692">
    <property type="taxonomic scope" value="Bacteria"/>
</dbReference>
<dbReference type="HOGENOM" id="CLU_032162_3_1_6"/>
<dbReference type="GO" id="GO:0005737">
    <property type="term" value="C:cytoplasm"/>
    <property type="evidence" value="ECO:0007669"/>
    <property type="project" value="UniProtKB-SubCell"/>
</dbReference>
<dbReference type="GO" id="GO:0004844">
    <property type="term" value="F:uracil DNA N-glycosylase activity"/>
    <property type="evidence" value="ECO:0007669"/>
    <property type="project" value="UniProtKB-UniRule"/>
</dbReference>
<dbReference type="GO" id="GO:0097510">
    <property type="term" value="P:base-excision repair, AP site formation via deaminated base removal"/>
    <property type="evidence" value="ECO:0007669"/>
    <property type="project" value="TreeGrafter"/>
</dbReference>
<dbReference type="CDD" id="cd10027">
    <property type="entry name" value="UDG-F1-like"/>
    <property type="match status" value="1"/>
</dbReference>
<dbReference type="FunFam" id="3.40.470.10:FF:000001">
    <property type="entry name" value="Uracil-DNA glycosylase"/>
    <property type="match status" value="1"/>
</dbReference>
<dbReference type="Gene3D" id="3.40.470.10">
    <property type="entry name" value="Uracil-DNA glycosylase-like domain"/>
    <property type="match status" value="1"/>
</dbReference>
<dbReference type="HAMAP" id="MF_00148">
    <property type="entry name" value="UDG"/>
    <property type="match status" value="1"/>
</dbReference>
<dbReference type="InterPro" id="IPR002043">
    <property type="entry name" value="UDG_fam1"/>
</dbReference>
<dbReference type="InterPro" id="IPR018085">
    <property type="entry name" value="Ura-DNA_Glyclase_AS"/>
</dbReference>
<dbReference type="InterPro" id="IPR005122">
    <property type="entry name" value="Uracil-DNA_glycosylase-like"/>
</dbReference>
<dbReference type="InterPro" id="IPR036895">
    <property type="entry name" value="Uracil-DNA_glycosylase-like_sf"/>
</dbReference>
<dbReference type="NCBIfam" id="NF003588">
    <property type="entry name" value="PRK05254.1-1"/>
    <property type="match status" value="1"/>
</dbReference>
<dbReference type="NCBIfam" id="NF003589">
    <property type="entry name" value="PRK05254.1-2"/>
    <property type="match status" value="1"/>
</dbReference>
<dbReference type="NCBIfam" id="NF003591">
    <property type="entry name" value="PRK05254.1-4"/>
    <property type="match status" value="1"/>
</dbReference>
<dbReference type="NCBIfam" id="NF003592">
    <property type="entry name" value="PRK05254.1-5"/>
    <property type="match status" value="1"/>
</dbReference>
<dbReference type="NCBIfam" id="TIGR00628">
    <property type="entry name" value="ung"/>
    <property type="match status" value="1"/>
</dbReference>
<dbReference type="PANTHER" id="PTHR11264">
    <property type="entry name" value="URACIL-DNA GLYCOSYLASE"/>
    <property type="match status" value="1"/>
</dbReference>
<dbReference type="PANTHER" id="PTHR11264:SF0">
    <property type="entry name" value="URACIL-DNA GLYCOSYLASE"/>
    <property type="match status" value="1"/>
</dbReference>
<dbReference type="Pfam" id="PF03167">
    <property type="entry name" value="UDG"/>
    <property type="match status" value="1"/>
</dbReference>
<dbReference type="SMART" id="SM00986">
    <property type="entry name" value="UDG"/>
    <property type="match status" value="1"/>
</dbReference>
<dbReference type="SMART" id="SM00987">
    <property type="entry name" value="UreE_C"/>
    <property type="match status" value="1"/>
</dbReference>
<dbReference type="SUPFAM" id="SSF52141">
    <property type="entry name" value="Uracil-DNA glycosylase-like"/>
    <property type="match status" value="1"/>
</dbReference>
<dbReference type="PROSITE" id="PS00130">
    <property type="entry name" value="U_DNA_GLYCOSYLASE"/>
    <property type="match status" value="1"/>
</dbReference>
<keyword id="KW-0963">Cytoplasm</keyword>
<keyword id="KW-0227">DNA damage</keyword>
<keyword id="KW-0234">DNA repair</keyword>
<keyword id="KW-0378">Hydrolase</keyword>
<feature type="chain" id="PRO_1000009930" description="Uracil-DNA glycosylase">
    <location>
        <begin position="1"/>
        <end position="230"/>
    </location>
</feature>
<feature type="active site" description="Proton acceptor" evidence="1">
    <location>
        <position position="70"/>
    </location>
</feature>
<organism>
    <name type="scientific">Pseudomonas putida (strain ATCC 700007 / DSM 6899 / JCM 31910 / BCRC 17059 / LMG 24140 / F1)</name>
    <dbReference type="NCBI Taxonomy" id="351746"/>
    <lineage>
        <taxon>Bacteria</taxon>
        <taxon>Pseudomonadati</taxon>
        <taxon>Pseudomonadota</taxon>
        <taxon>Gammaproteobacteria</taxon>
        <taxon>Pseudomonadales</taxon>
        <taxon>Pseudomonadaceae</taxon>
        <taxon>Pseudomonas</taxon>
    </lineage>
</organism>
<name>UNG_PSEP1</name>
<evidence type="ECO:0000255" key="1">
    <source>
        <dbReference type="HAMAP-Rule" id="MF_00148"/>
    </source>
</evidence>
<accession>A5W8H2</accession>